<comment type="function">
    <text evidence="3">Ion channel inhibitor.</text>
</comment>
<comment type="subcellular location">
    <subcellularLocation>
        <location evidence="1">Secreted</location>
    </subcellularLocation>
</comment>
<comment type="tissue specificity">
    <text>Expressed by the venom gland.</text>
</comment>
<comment type="domain">
    <text evidence="1">The presence of a 'disulfide through disulfide knot' structurally defines this protein as a knottin.</text>
</comment>
<comment type="similarity">
    <text evidence="3">Belongs to the neurotoxin 14 (magi-1) family. 06 (ICK-Trit) subfamily.</text>
</comment>
<accession>W4VSI3</accession>
<protein>
    <recommendedName>
        <fullName>U16-barytoxin-Tl1f</fullName>
        <shortName>U16-BATX-Tl1f</shortName>
    </recommendedName>
    <alternativeName>
        <fullName>Toxin ICK-33</fullName>
    </alternativeName>
</protein>
<dbReference type="EMBL" id="GAQE01000036">
    <property type="protein sequence ID" value="JAB84518.1"/>
    <property type="molecule type" value="Transcribed_RNA"/>
</dbReference>
<dbReference type="SMR" id="W4VSI3"/>
<dbReference type="ArachnoServer" id="AS001661">
    <property type="toxin name" value="U16-barytoxin-Tl1f"/>
</dbReference>
<dbReference type="GO" id="GO:0005576">
    <property type="term" value="C:extracellular region"/>
    <property type="evidence" value="ECO:0007669"/>
    <property type="project" value="UniProtKB-SubCell"/>
</dbReference>
<dbReference type="GO" id="GO:0019871">
    <property type="term" value="F:sodium channel inhibitor activity"/>
    <property type="evidence" value="ECO:0007669"/>
    <property type="project" value="InterPro"/>
</dbReference>
<dbReference type="GO" id="GO:0090729">
    <property type="term" value="F:toxin activity"/>
    <property type="evidence" value="ECO:0007669"/>
    <property type="project" value="UniProtKB-KW"/>
</dbReference>
<dbReference type="InterPro" id="IPR012627">
    <property type="entry name" value="Toxin_22"/>
</dbReference>
<dbReference type="Pfam" id="PF08092">
    <property type="entry name" value="Toxin_22"/>
    <property type="match status" value="1"/>
</dbReference>
<sequence>MKTIIVFLSLLVLATKFGDANEGVNQEQMKEVIQNEFREDFLNEMAPMSLLQQLEAIESTLLEKEADRNSRQKRCNGENVPCGPNHSTCCSGLSCEETFGYGWWYDTPFCVKPSKG</sequence>
<keyword id="KW-0165">Cleavage on pair of basic residues</keyword>
<keyword id="KW-1015">Disulfide bond</keyword>
<keyword id="KW-0325">Glycoprotein</keyword>
<keyword id="KW-0872">Ion channel impairing toxin</keyword>
<keyword id="KW-0960">Knottin</keyword>
<keyword id="KW-0964">Secreted</keyword>
<keyword id="KW-0732">Signal</keyword>
<keyword id="KW-0800">Toxin</keyword>
<feature type="signal peptide" evidence="2">
    <location>
        <begin position="1"/>
        <end position="20"/>
    </location>
</feature>
<feature type="propeptide" id="PRO_0000435156" evidence="3">
    <location>
        <begin position="21"/>
        <end position="74"/>
    </location>
</feature>
<feature type="chain" id="PRO_0000429240" description="U16-barytoxin-Tl1f">
    <location>
        <begin position="75"/>
        <end position="116"/>
    </location>
</feature>
<feature type="glycosylation site" description="N-linked (GlcNAc...) asparagine" evidence="2">
    <location>
        <position position="85"/>
    </location>
</feature>
<feature type="disulfide bond" evidence="1">
    <location>
        <begin position="75"/>
        <end position="90"/>
    </location>
</feature>
<feature type="disulfide bond" evidence="1">
    <location>
        <begin position="82"/>
        <end position="95"/>
    </location>
</feature>
<feature type="disulfide bond" evidence="1">
    <location>
        <begin position="89"/>
        <end position="110"/>
    </location>
</feature>
<evidence type="ECO:0000250" key="1"/>
<evidence type="ECO:0000255" key="2"/>
<evidence type="ECO:0000305" key="3"/>
<proteinExistence type="evidence at transcript level"/>
<reference key="1">
    <citation type="journal article" date="2013" name="Toxins">
        <title>A proteomics and transcriptomics investigation of the venom from the barychelid spider Trittame loki (brush-foot trapdoor).</title>
        <authorList>
            <person name="Undheim E.A."/>
            <person name="Sunagar K."/>
            <person name="Herzig V."/>
            <person name="Kely L."/>
            <person name="Low D.H."/>
            <person name="Jackson T.N."/>
            <person name="Jones A."/>
            <person name="Kurniawan N."/>
            <person name="King G.F."/>
            <person name="Ali S.A."/>
            <person name="Antunes A."/>
            <person name="Ruder T."/>
            <person name="Fry B.G."/>
        </authorList>
    </citation>
    <scope>NUCLEOTIDE SEQUENCE [MRNA]</scope>
    <source>
        <tissue>Venom gland</tissue>
    </source>
</reference>
<name>ICK33_TRILK</name>
<organism>
    <name type="scientific">Trittame loki</name>
    <name type="common">Brush-footed trapdoor spider</name>
    <dbReference type="NCBI Taxonomy" id="1295018"/>
    <lineage>
        <taxon>Eukaryota</taxon>
        <taxon>Metazoa</taxon>
        <taxon>Ecdysozoa</taxon>
        <taxon>Arthropoda</taxon>
        <taxon>Chelicerata</taxon>
        <taxon>Arachnida</taxon>
        <taxon>Araneae</taxon>
        <taxon>Mygalomorphae</taxon>
        <taxon>Barychelidae</taxon>
        <taxon>Trittame</taxon>
    </lineage>
</organism>